<dbReference type="EC" id="3.1.1.1" evidence="1"/>
<dbReference type="EMBL" id="BA000031">
    <property type="protein sequence ID" value="BAC58937.1"/>
    <property type="molecule type" value="Genomic_DNA"/>
</dbReference>
<dbReference type="RefSeq" id="NP_797053.1">
    <property type="nucleotide sequence ID" value="NC_004603.1"/>
</dbReference>
<dbReference type="RefSeq" id="WP_005455935.1">
    <property type="nucleotide sequence ID" value="NC_004603.1"/>
</dbReference>
<dbReference type="SMR" id="Q87RV2"/>
<dbReference type="ESTHER" id="vibpa-y674">
    <property type="family name" value="Duf_1100-R"/>
</dbReference>
<dbReference type="GeneID" id="1188149"/>
<dbReference type="KEGG" id="vpa:VP0674"/>
<dbReference type="PATRIC" id="fig|223926.6.peg.642"/>
<dbReference type="eggNOG" id="COG1073">
    <property type="taxonomic scope" value="Bacteria"/>
</dbReference>
<dbReference type="HOGENOM" id="CLU_036819_0_0_6"/>
<dbReference type="Proteomes" id="UP000002493">
    <property type="component" value="Chromosome 1"/>
</dbReference>
<dbReference type="GO" id="GO:0106435">
    <property type="term" value="F:carboxylesterase activity"/>
    <property type="evidence" value="ECO:0007669"/>
    <property type="project" value="UniProtKB-EC"/>
</dbReference>
<dbReference type="Gene3D" id="3.40.50.1820">
    <property type="entry name" value="alpha/beta hydrolase"/>
    <property type="match status" value="1"/>
</dbReference>
<dbReference type="HAMAP" id="MF_01063">
    <property type="entry name" value="FrsA"/>
    <property type="match status" value="1"/>
</dbReference>
<dbReference type="InterPro" id="IPR029058">
    <property type="entry name" value="AB_hydrolase_fold"/>
</dbReference>
<dbReference type="InterPro" id="IPR043423">
    <property type="entry name" value="FrsA"/>
</dbReference>
<dbReference type="InterPro" id="IPR010520">
    <property type="entry name" value="FrsA-like"/>
</dbReference>
<dbReference type="InterPro" id="IPR050261">
    <property type="entry name" value="FrsA_esterase"/>
</dbReference>
<dbReference type="NCBIfam" id="NF003460">
    <property type="entry name" value="PRK05077.1"/>
    <property type="match status" value="1"/>
</dbReference>
<dbReference type="PANTHER" id="PTHR22946">
    <property type="entry name" value="DIENELACTONE HYDROLASE DOMAIN-CONTAINING PROTEIN-RELATED"/>
    <property type="match status" value="1"/>
</dbReference>
<dbReference type="PANTHER" id="PTHR22946:SF4">
    <property type="entry name" value="ESTERASE FRSA"/>
    <property type="match status" value="1"/>
</dbReference>
<dbReference type="Pfam" id="PF06500">
    <property type="entry name" value="FrsA-like"/>
    <property type="match status" value="1"/>
</dbReference>
<dbReference type="SUPFAM" id="SSF53474">
    <property type="entry name" value="alpha/beta-Hydrolases"/>
    <property type="match status" value="1"/>
</dbReference>
<comment type="function">
    <text evidence="1">Catalyzes the hydrolysis of esters.</text>
</comment>
<comment type="catalytic activity">
    <reaction evidence="1">
        <text>a carboxylic ester + H2O = an alcohol + a carboxylate + H(+)</text>
        <dbReference type="Rhea" id="RHEA:21164"/>
        <dbReference type="ChEBI" id="CHEBI:15377"/>
        <dbReference type="ChEBI" id="CHEBI:15378"/>
        <dbReference type="ChEBI" id="CHEBI:29067"/>
        <dbReference type="ChEBI" id="CHEBI:30879"/>
        <dbReference type="ChEBI" id="CHEBI:33308"/>
        <dbReference type="EC" id="3.1.1.1"/>
    </reaction>
</comment>
<comment type="similarity">
    <text evidence="1">Belongs to the FrsA family.</text>
</comment>
<proteinExistence type="inferred from homology"/>
<gene>
    <name evidence="1" type="primary">frsA</name>
    <name type="ordered locus">VP0674</name>
</gene>
<organism>
    <name type="scientific">Vibrio parahaemolyticus serotype O3:K6 (strain RIMD 2210633)</name>
    <dbReference type="NCBI Taxonomy" id="223926"/>
    <lineage>
        <taxon>Bacteria</taxon>
        <taxon>Pseudomonadati</taxon>
        <taxon>Pseudomonadota</taxon>
        <taxon>Gammaproteobacteria</taxon>
        <taxon>Vibrionales</taxon>
        <taxon>Vibrionaceae</taxon>
        <taxon>Vibrio</taxon>
    </lineage>
</organism>
<reference key="1">
    <citation type="journal article" date="2003" name="Lancet">
        <title>Genome sequence of Vibrio parahaemolyticus: a pathogenic mechanism distinct from that of V. cholerae.</title>
        <authorList>
            <person name="Makino K."/>
            <person name="Oshima K."/>
            <person name="Kurokawa K."/>
            <person name="Yokoyama K."/>
            <person name="Uda T."/>
            <person name="Tagomori K."/>
            <person name="Iijima Y."/>
            <person name="Najima M."/>
            <person name="Nakano M."/>
            <person name="Yamashita A."/>
            <person name="Kubota Y."/>
            <person name="Kimura S."/>
            <person name="Yasunaga T."/>
            <person name="Honda T."/>
            <person name="Shinagawa H."/>
            <person name="Hattori M."/>
            <person name="Iida T."/>
        </authorList>
    </citation>
    <scope>NUCLEOTIDE SEQUENCE [LARGE SCALE GENOMIC DNA]</scope>
    <source>
        <strain>RIMD 2210633</strain>
    </source>
</reference>
<keyword id="KW-0378">Hydrolase</keyword>
<keyword id="KW-0719">Serine esterase</keyword>
<protein>
    <recommendedName>
        <fullName evidence="1">Esterase FrsA</fullName>
        <ecNumber evidence="1">3.1.1.1</ecNumber>
    </recommendedName>
</protein>
<sequence>MSEDVSKNLSETLFVKHKQAKETSALTQYMPTSKKILDDREQQEDRAWYRHLRRLQWAWQGLSPIEMEGVLSRIASSTHSRTHDDWLDTVMGYHSGNWTFEWIKLGMEHQRRANDLKGEDAADELFTASLCFSIAGYPHLKNDNLALQAQVLANKAYSEGAEKTQYTIKQIEVPYQKRKIIANLHLPRTDKQLPVVMVSAGLDSLQTDMWRLFRNHFAPKDIAMLTVDMPSVGHSSHWPLTEDSSCLHQAVLNELYSIPYVDHHKVGLVGFRFGGNAMVRLSFLEQEKIKACVALGAPVHDLFTSPKKLQKMPKMYLDMLASRLGKSAVDINSMAGQMMAWSLKVQGFLSSRKTKVPILALSLEGDPVSPYSDNQLVALFSHYGQAKKISSKTITKGYEQSLDLAIKWLEDELLR</sequence>
<name>FRSA_VIBPA</name>
<accession>Q87RV2</accession>
<evidence type="ECO:0000255" key="1">
    <source>
        <dbReference type="HAMAP-Rule" id="MF_01063"/>
    </source>
</evidence>
<feature type="chain" id="PRO_0000197160" description="Esterase FrsA">
    <location>
        <begin position="1"/>
        <end position="415"/>
    </location>
</feature>